<proteinExistence type="inferred from homology"/>
<feature type="chain" id="PRO_1000188624" description="tRNA-cytidine(32) 2-sulfurtransferase">
    <location>
        <begin position="1"/>
        <end position="307"/>
    </location>
</feature>
<feature type="short sequence motif" description="PP-loop motif" evidence="1">
    <location>
        <begin position="44"/>
        <end position="49"/>
    </location>
</feature>
<feature type="binding site" evidence="1">
    <location>
        <position position="119"/>
    </location>
    <ligand>
        <name>[4Fe-4S] cluster</name>
        <dbReference type="ChEBI" id="CHEBI:49883"/>
    </ligand>
</feature>
<feature type="binding site" evidence="1">
    <location>
        <position position="122"/>
    </location>
    <ligand>
        <name>[4Fe-4S] cluster</name>
        <dbReference type="ChEBI" id="CHEBI:49883"/>
    </ligand>
</feature>
<feature type="binding site" evidence="1">
    <location>
        <position position="210"/>
    </location>
    <ligand>
        <name>[4Fe-4S] cluster</name>
        <dbReference type="ChEBI" id="CHEBI:49883"/>
    </ligand>
</feature>
<protein>
    <recommendedName>
        <fullName evidence="1">tRNA-cytidine(32) 2-sulfurtransferase</fullName>
        <ecNumber evidence="1">2.8.1.-</ecNumber>
    </recommendedName>
    <alternativeName>
        <fullName evidence="1">Two-thiocytidine biosynthesis protein A</fullName>
    </alternativeName>
    <alternativeName>
        <fullName evidence="1">tRNA 2-thiocytidine biosynthesis protein TtcA</fullName>
    </alternativeName>
</protein>
<accession>B6ELU0</accession>
<keyword id="KW-0004">4Fe-4S</keyword>
<keyword id="KW-0067">ATP-binding</keyword>
<keyword id="KW-0963">Cytoplasm</keyword>
<keyword id="KW-0408">Iron</keyword>
<keyword id="KW-0411">Iron-sulfur</keyword>
<keyword id="KW-0460">Magnesium</keyword>
<keyword id="KW-0479">Metal-binding</keyword>
<keyword id="KW-0547">Nucleotide-binding</keyword>
<keyword id="KW-0694">RNA-binding</keyword>
<keyword id="KW-0808">Transferase</keyword>
<keyword id="KW-0819">tRNA processing</keyword>
<keyword id="KW-0820">tRNA-binding</keyword>
<dbReference type="EC" id="2.8.1.-" evidence="1"/>
<dbReference type="EMBL" id="FM178379">
    <property type="protein sequence ID" value="CAQ79258.1"/>
    <property type="molecule type" value="Genomic_DNA"/>
</dbReference>
<dbReference type="RefSeq" id="WP_012550223.1">
    <property type="nucleotide sequence ID" value="NC_011312.1"/>
</dbReference>
<dbReference type="SMR" id="B6ELU0"/>
<dbReference type="KEGG" id="vsa:VSAL_I1573"/>
<dbReference type="eggNOG" id="COG0037">
    <property type="taxonomic scope" value="Bacteria"/>
</dbReference>
<dbReference type="HOGENOM" id="CLU_026481_0_0_6"/>
<dbReference type="Proteomes" id="UP000001730">
    <property type="component" value="Chromosome 1"/>
</dbReference>
<dbReference type="GO" id="GO:0005737">
    <property type="term" value="C:cytoplasm"/>
    <property type="evidence" value="ECO:0007669"/>
    <property type="project" value="UniProtKB-SubCell"/>
</dbReference>
<dbReference type="GO" id="GO:0051539">
    <property type="term" value="F:4 iron, 4 sulfur cluster binding"/>
    <property type="evidence" value="ECO:0007669"/>
    <property type="project" value="UniProtKB-UniRule"/>
</dbReference>
<dbReference type="GO" id="GO:0005524">
    <property type="term" value="F:ATP binding"/>
    <property type="evidence" value="ECO:0007669"/>
    <property type="project" value="UniProtKB-UniRule"/>
</dbReference>
<dbReference type="GO" id="GO:0000287">
    <property type="term" value="F:magnesium ion binding"/>
    <property type="evidence" value="ECO:0007669"/>
    <property type="project" value="UniProtKB-UniRule"/>
</dbReference>
<dbReference type="GO" id="GO:0016783">
    <property type="term" value="F:sulfurtransferase activity"/>
    <property type="evidence" value="ECO:0007669"/>
    <property type="project" value="UniProtKB-UniRule"/>
</dbReference>
<dbReference type="GO" id="GO:0000049">
    <property type="term" value="F:tRNA binding"/>
    <property type="evidence" value="ECO:0007669"/>
    <property type="project" value="UniProtKB-KW"/>
</dbReference>
<dbReference type="GO" id="GO:0034227">
    <property type="term" value="P:tRNA thio-modification"/>
    <property type="evidence" value="ECO:0007669"/>
    <property type="project" value="UniProtKB-UniRule"/>
</dbReference>
<dbReference type="CDD" id="cd24138">
    <property type="entry name" value="TtcA-like"/>
    <property type="match status" value="1"/>
</dbReference>
<dbReference type="Gene3D" id="3.40.50.620">
    <property type="entry name" value="HUPs"/>
    <property type="match status" value="1"/>
</dbReference>
<dbReference type="HAMAP" id="MF_01850">
    <property type="entry name" value="TtcA"/>
    <property type="match status" value="1"/>
</dbReference>
<dbReference type="InterPro" id="IPR014729">
    <property type="entry name" value="Rossmann-like_a/b/a_fold"/>
</dbReference>
<dbReference type="InterPro" id="IPR011063">
    <property type="entry name" value="TilS/TtcA_N"/>
</dbReference>
<dbReference type="InterPro" id="IPR012089">
    <property type="entry name" value="tRNA_Cyd_32_2_STrfase"/>
</dbReference>
<dbReference type="InterPro" id="IPR035107">
    <property type="entry name" value="tRNA_thiolation_TtcA_Ctu1"/>
</dbReference>
<dbReference type="NCBIfam" id="NF007972">
    <property type="entry name" value="PRK10696.1"/>
    <property type="match status" value="1"/>
</dbReference>
<dbReference type="PANTHER" id="PTHR43686:SF1">
    <property type="entry name" value="AMINOTRAN_5 DOMAIN-CONTAINING PROTEIN"/>
    <property type="match status" value="1"/>
</dbReference>
<dbReference type="PANTHER" id="PTHR43686">
    <property type="entry name" value="SULFURTRANSFERASE-RELATED"/>
    <property type="match status" value="1"/>
</dbReference>
<dbReference type="Pfam" id="PF01171">
    <property type="entry name" value="ATP_bind_3"/>
    <property type="match status" value="1"/>
</dbReference>
<dbReference type="PIRSF" id="PIRSF004976">
    <property type="entry name" value="ATPase_YdaO"/>
    <property type="match status" value="1"/>
</dbReference>
<dbReference type="SUPFAM" id="SSF52402">
    <property type="entry name" value="Adenine nucleotide alpha hydrolases-like"/>
    <property type="match status" value="1"/>
</dbReference>
<sequence>MSELTKAQQQNFTKLQKKIRRNTGKAIADYNMIEDGDRIMVCLSGGKDSFTMLDILIGLKKSAPISFDLIAVNLDQKQPGFPTHILPEYLDTLGVEYRVVEEDTYSIVQDKLIEGKTTCSLCSRLRRGILYRTAKELGATKIALGHHRDDILETMFLNMFYGGKLKGMPPKLVSDNGEHVVIRPLAYCREKDIIKYADLADYPIIPCNLCGSQPNMQRQNIKQMLNTWDTQFPGRIESMFTAMQNVVPSHLADFNTFDFKSINRDSGVINGGDIGFDKEEMPVQPVDIDDAVTEFDPSLKLDIVNVQ</sequence>
<comment type="function">
    <text evidence="1">Catalyzes the ATP-dependent 2-thiolation of cytidine in position 32 of tRNA, to form 2-thiocytidine (s(2)C32). The sulfur atoms are provided by the cysteine/cysteine desulfurase (IscS) system.</text>
</comment>
<comment type="catalytic activity">
    <reaction evidence="1">
        <text>cytidine(32) in tRNA + S-sulfanyl-L-cysteinyl-[cysteine desulfurase] + AH2 + ATP = 2-thiocytidine(32) in tRNA + L-cysteinyl-[cysteine desulfurase] + A + AMP + diphosphate + H(+)</text>
        <dbReference type="Rhea" id="RHEA:57048"/>
        <dbReference type="Rhea" id="RHEA-COMP:10288"/>
        <dbReference type="Rhea" id="RHEA-COMP:12157"/>
        <dbReference type="Rhea" id="RHEA-COMP:12158"/>
        <dbReference type="Rhea" id="RHEA-COMP:14821"/>
        <dbReference type="ChEBI" id="CHEBI:13193"/>
        <dbReference type="ChEBI" id="CHEBI:15378"/>
        <dbReference type="ChEBI" id="CHEBI:17499"/>
        <dbReference type="ChEBI" id="CHEBI:29950"/>
        <dbReference type="ChEBI" id="CHEBI:30616"/>
        <dbReference type="ChEBI" id="CHEBI:33019"/>
        <dbReference type="ChEBI" id="CHEBI:61963"/>
        <dbReference type="ChEBI" id="CHEBI:82748"/>
        <dbReference type="ChEBI" id="CHEBI:141453"/>
        <dbReference type="ChEBI" id="CHEBI:456215"/>
    </reaction>
    <physiologicalReaction direction="left-to-right" evidence="1">
        <dbReference type="Rhea" id="RHEA:57049"/>
    </physiologicalReaction>
</comment>
<comment type="cofactor">
    <cofactor evidence="1">
        <name>Mg(2+)</name>
        <dbReference type="ChEBI" id="CHEBI:18420"/>
    </cofactor>
</comment>
<comment type="cofactor">
    <cofactor evidence="1">
        <name>[4Fe-4S] cluster</name>
        <dbReference type="ChEBI" id="CHEBI:49883"/>
    </cofactor>
    <text evidence="1">Binds 1 [4Fe-4S] cluster per subunit. The cluster is chelated by three Cys residues, the fourth Fe has a free coordination site that may bind a sulfur atom transferred from the persulfide of IscS.</text>
</comment>
<comment type="pathway">
    <text evidence="1">tRNA modification.</text>
</comment>
<comment type="subunit">
    <text evidence="1">Homodimer.</text>
</comment>
<comment type="subcellular location">
    <subcellularLocation>
        <location evidence="1">Cytoplasm</location>
    </subcellularLocation>
</comment>
<comment type="miscellaneous">
    <text evidence="1">The thiolation reaction likely consists of two steps: a first activation step by ATP to form an adenylated intermediate of the target base of tRNA, and a second nucleophilic substitution step of the sulfur (S) atom supplied by the hydrosulfide attached to the Fe-S cluster.</text>
</comment>
<comment type="similarity">
    <text evidence="1">Belongs to the TtcA family.</text>
</comment>
<evidence type="ECO:0000255" key="1">
    <source>
        <dbReference type="HAMAP-Rule" id="MF_01850"/>
    </source>
</evidence>
<name>TTCA_ALISL</name>
<organism>
    <name type="scientific">Aliivibrio salmonicida (strain LFI1238)</name>
    <name type="common">Vibrio salmonicida (strain LFI1238)</name>
    <dbReference type="NCBI Taxonomy" id="316275"/>
    <lineage>
        <taxon>Bacteria</taxon>
        <taxon>Pseudomonadati</taxon>
        <taxon>Pseudomonadota</taxon>
        <taxon>Gammaproteobacteria</taxon>
        <taxon>Vibrionales</taxon>
        <taxon>Vibrionaceae</taxon>
        <taxon>Aliivibrio</taxon>
    </lineage>
</organism>
<reference key="1">
    <citation type="journal article" date="2008" name="BMC Genomics">
        <title>The genome sequence of the fish pathogen Aliivibrio salmonicida strain LFI1238 shows extensive evidence of gene decay.</title>
        <authorList>
            <person name="Hjerde E."/>
            <person name="Lorentzen M.S."/>
            <person name="Holden M.T."/>
            <person name="Seeger K."/>
            <person name="Paulsen S."/>
            <person name="Bason N."/>
            <person name="Churcher C."/>
            <person name="Harris D."/>
            <person name="Norbertczak H."/>
            <person name="Quail M.A."/>
            <person name="Sanders S."/>
            <person name="Thurston S."/>
            <person name="Parkhill J."/>
            <person name="Willassen N.P."/>
            <person name="Thomson N.R."/>
        </authorList>
    </citation>
    <scope>NUCLEOTIDE SEQUENCE [LARGE SCALE GENOMIC DNA]</scope>
    <source>
        <strain>LFI1238</strain>
    </source>
</reference>
<gene>
    <name evidence="1" type="primary">ttcA</name>
    <name type="ordered locus">VSAL_I1573</name>
</gene>